<name>RECR_FRATN</name>
<proteinExistence type="inferred from homology"/>
<keyword id="KW-0227">DNA damage</keyword>
<keyword id="KW-0233">DNA recombination</keyword>
<keyword id="KW-0234">DNA repair</keyword>
<keyword id="KW-0479">Metal-binding</keyword>
<keyword id="KW-0862">Zinc</keyword>
<keyword id="KW-0863">Zinc-finger</keyword>
<gene>
    <name evidence="1" type="primary">recR</name>
    <name type="ordered locus">FTN_1197</name>
</gene>
<evidence type="ECO:0000255" key="1">
    <source>
        <dbReference type="HAMAP-Rule" id="MF_00017"/>
    </source>
</evidence>
<protein>
    <recommendedName>
        <fullName evidence="1">Recombination protein RecR</fullName>
    </recommendedName>
</protein>
<reference key="1">
    <citation type="journal article" date="2007" name="Genome Biol.">
        <title>Comparison of Francisella tularensis genomes reveals evolutionary events associated with the emergence of human pathogenic strains.</title>
        <authorList>
            <person name="Rohmer L."/>
            <person name="Fong C."/>
            <person name="Abmayr S."/>
            <person name="Wasnick M."/>
            <person name="Larson Freeman T.J."/>
            <person name="Radey M."/>
            <person name="Guina T."/>
            <person name="Svensson K."/>
            <person name="Hayden H.S."/>
            <person name="Jacobs M."/>
            <person name="Gallagher L.A."/>
            <person name="Manoil C."/>
            <person name="Ernst R.K."/>
            <person name="Drees B."/>
            <person name="Buckley D."/>
            <person name="Haugen E."/>
            <person name="Bovee D."/>
            <person name="Zhou Y."/>
            <person name="Chang J."/>
            <person name="Levy R."/>
            <person name="Lim R."/>
            <person name="Gillett W."/>
            <person name="Guenthener D."/>
            <person name="Kang A."/>
            <person name="Shaffer S.A."/>
            <person name="Taylor G."/>
            <person name="Chen J."/>
            <person name="Gallis B."/>
            <person name="D'Argenio D.A."/>
            <person name="Forsman M."/>
            <person name="Olson M.V."/>
            <person name="Goodlett D.R."/>
            <person name="Kaul R."/>
            <person name="Miller S.I."/>
            <person name="Brittnacher M.J."/>
        </authorList>
    </citation>
    <scope>NUCLEOTIDE SEQUENCE [LARGE SCALE GENOMIC DNA]</scope>
    <source>
        <strain>U112</strain>
    </source>
</reference>
<feature type="chain" id="PRO_1000001543" description="Recombination protein RecR">
    <location>
        <begin position="1"/>
        <end position="200"/>
    </location>
</feature>
<feature type="domain" description="Toprim" evidence="1">
    <location>
        <begin position="83"/>
        <end position="177"/>
    </location>
</feature>
<feature type="zinc finger region" description="C4-type" evidence="1">
    <location>
        <begin position="60"/>
        <end position="75"/>
    </location>
</feature>
<dbReference type="EMBL" id="CP000439">
    <property type="protein sequence ID" value="ABK90083.1"/>
    <property type="molecule type" value="Genomic_DNA"/>
</dbReference>
<dbReference type="RefSeq" id="WP_003034340.1">
    <property type="nucleotide sequence ID" value="NZ_CP009633.1"/>
</dbReference>
<dbReference type="SMR" id="A0Q768"/>
<dbReference type="KEGG" id="ftn:FTN_1197"/>
<dbReference type="KEGG" id="ftx:AW25_810"/>
<dbReference type="BioCyc" id="FTUL401614:G1G75-1240-MONOMER"/>
<dbReference type="Proteomes" id="UP000000762">
    <property type="component" value="Chromosome"/>
</dbReference>
<dbReference type="GO" id="GO:0003677">
    <property type="term" value="F:DNA binding"/>
    <property type="evidence" value="ECO:0007669"/>
    <property type="project" value="UniProtKB-UniRule"/>
</dbReference>
<dbReference type="GO" id="GO:0008270">
    <property type="term" value="F:zinc ion binding"/>
    <property type="evidence" value="ECO:0007669"/>
    <property type="project" value="UniProtKB-KW"/>
</dbReference>
<dbReference type="GO" id="GO:0006310">
    <property type="term" value="P:DNA recombination"/>
    <property type="evidence" value="ECO:0007669"/>
    <property type="project" value="UniProtKB-UniRule"/>
</dbReference>
<dbReference type="GO" id="GO:0006281">
    <property type="term" value="P:DNA repair"/>
    <property type="evidence" value="ECO:0007669"/>
    <property type="project" value="UniProtKB-UniRule"/>
</dbReference>
<dbReference type="CDD" id="cd01025">
    <property type="entry name" value="TOPRIM_recR"/>
    <property type="match status" value="1"/>
</dbReference>
<dbReference type="Gene3D" id="3.40.1360.10">
    <property type="match status" value="1"/>
</dbReference>
<dbReference type="Gene3D" id="6.10.250.240">
    <property type="match status" value="1"/>
</dbReference>
<dbReference type="Gene3D" id="1.10.8.420">
    <property type="entry name" value="RecR Domain 1"/>
    <property type="match status" value="1"/>
</dbReference>
<dbReference type="HAMAP" id="MF_00017">
    <property type="entry name" value="RecR"/>
    <property type="match status" value="1"/>
</dbReference>
<dbReference type="InterPro" id="IPR000093">
    <property type="entry name" value="DNA_Rcmb_RecR"/>
</dbReference>
<dbReference type="InterPro" id="IPR023627">
    <property type="entry name" value="Rcmb_RecR"/>
</dbReference>
<dbReference type="InterPro" id="IPR015967">
    <property type="entry name" value="Rcmb_RecR_Znf"/>
</dbReference>
<dbReference type="InterPro" id="IPR006171">
    <property type="entry name" value="TOPRIM_dom"/>
</dbReference>
<dbReference type="InterPro" id="IPR034137">
    <property type="entry name" value="TOPRIM_RecR"/>
</dbReference>
<dbReference type="NCBIfam" id="TIGR00615">
    <property type="entry name" value="recR"/>
    <property type="match status" value="1"/>
</dbReference>
<dbReference type="PANTHER" id="PTHR30446">
    <property type="entry name" value="RECOMBINATION PROTEIN RECR"/>
    <property type="match status" value="1"/>
</dbReference>
<dbReference type="PANTHER" id="PTHR30446:SF0">
    <property type="entry name" value="RECOMBINATION PROTEIN RECR"/>
    <property type="match status" value="1"/>
</dbReference>
<dbReference type="Pfam" id="PF21175">
    <property type="entry name" value="RecR_C"/>
    <property type="match status" value="1"/>
</dbReference>
<dbReference type="Pfam" id="PF21176">
    <property type="entry name" value="RecR_HhH"/>
    <property type="match status" value="1"/>
</dbReference>
<dbReference type="Pfam" id="PF02132">
    <property type="entry name" value="RecR_ZnF"/>
    <property type="match status" value="1"/>
</dbReference>
<dbReference type="Pfam" id="PF13662">
    <property type="entry name" value="Toprim_4"/>
    <property type="match status" value="1"/>
</dbReference>
<dbReference type="SMART" id="SM00493">
    <property type="entry name" value="TOPRIM"/>
    <property type="match status" value="1"/>
</dbReference>
<dbReference type="SUPFAM" id="SSF111304">
    <property type="entry name" value="Recombination protein RecR"/>
    <property type="match status" value="1"/>
</dbReference>
<dbReference type="PROSITE" id="PS01300">
    <property type="entry name" value="RECR"/>
    <property type="match status" value="1"/>
</dbReference>
<dbReference type="PROSITE" id="PS50880">
    <property type="entry name" value="TOPRIM"/>
    <property type="match status" value="1"/>
</dbReference>
<accession>A0Q768</accession>
<organism>
    <name type="scientific">Francisella tularensis subsp. novicida (strain U112)</name>
    <dbReference type="NCBI Taxonomy" id="401614"/>
    <lineage>
        <taxon>Bacteria</taxon>
        <taxon>Pseudomonadati</taxon>
        <taxon>Pseudomonadota</taxon>
        <taxon>Gammaproteobacteria</taxon>
        <taxon>Thiotrichales</taxon>
        <taxon>Francisellaceae</taxon>
        <taxon>Francisella</taxon>
    </lineage>
</organism>
<comment type="function">
    <text evidence="1">May play a role in DNA repair. It seems to be involved in an RecBC-independent recombinational process of DNA repair. It may act with RecF and RecO.</text>
</comment>
<comment type="similarity">
    <text evidence="1">Belongs to the RecR family.</text>
</comment>
<sequence>MTSKIFSPKISAVIESLRKLPTIGKKSSQRLALYLLDKSPETARAIANSLLDATANIKKCVYCQALTEDDVCNICSNTNRDDTKLCIIESMLDMIAIEEAGIYRGKYFVLNGRISPLDGVGPSELKLDILQRIIADRKIDEVILAISPTVEGETTAHFISQMIAKDIKISRIGFGVPFGGELEYLDQQTLLHAFNARTNI</sequence>